<protein>
    <recommendedName>
        <fullName evidence="1">Small ribosomal subunit protein uS7</fullName>
    </recommendedName>
    <alternativeName>
        <fullName evidence="2">30S ribosomal protein S7</fullName>
    </alternativeName>
</protein>
<keyword id="KW-1185">Reference proteome</keyword>
<keyword id="KW-0687">Ribonucleoprotein</keyword>
<keyword id="KW-0689">Ribosomal protein</keyword>
<keyword id="KW-0694">RNA-binding</keyword>
<keyword id="KW-0699">rRNA-binding</keyword>
<keyword id="KW-0820">tRNA-binding</keyword>
<accession>Q8EX20</accession>
<gene>
    <name evidence="1" type="primary">rpsG</name>
    <name type="ordered locus">MYPE300</name>
</gene>
<sequence>MRKNRATKREILPDPVYNSRLVTKAINAIMLEGKKGLAQQIVYQSFDLIKKKTNEDGIEVFKKALENIMPSLELRVRRVAGSNFQVPTVVSKERKQTLGLRWLILSARKRNEKSMIEKLAAEIIDASKGTGAAFKKKEDTHKMAEANKAFAHLRF</sequence>
<dbReference type="EMBL" id="BA000026">
    <property type="protein sequence ID" value="BAC43820.1"/>
    <property type="molecule type" value="Genomic_DNA"/>
</dbReference>
<dbReference type="RefSeq" id="WP_011076856.1">
    <property type="nucleotide sequence ID" value="NC_004432.1"/>
</dbReference>
<dbReference type="SMR" id="Q8EX20"/>
<dbReference type="FunCoup" id="Q8EX20">
    <property type="interactions" value="266"/>
</dbReference>
<dbReference type="STRING" id="272633.gene:10731121"/>
<dbReference type="KEGG" id="mpe:MYPE300"/>
<dbReference type="eggNOG" id="COG0049">
    <property type="taxonomic scope" value="Bacteria"/>
</dbReference>
<dbReference type="HOGENOM" id="CLU_072226_1_1_14"/>
<dbReference type="InParanoid" id="Q8EX20"/>
<dbReference type="Proteomes" id="UP000002522">
    <property type="component" value="Chromosome"/>
</dbReference>
<dbReference type="GO" id="GO:0015935">
    <property type="term" value="C:small ribosomal subunit"/>
    <property type="evidence" value="ECO:0007669"/>
    <property type="project" value="InterPro"/>
</dbReference>
<dbReference type="GO" id="GO:0019843">
    <property type="term" value="F:rRNA binding"/>
    <property type="evidence" value="ECO:0007669"/>
    <property type="project" value="UniProtKB-UniRule"/>
</dbReference>
<dbReference type="GO" id="GO:0003735">
    <property type="term" value="F:structural constituent of ribosome"/>
    <property type="evidence" value="ECO:0007669"/>
    <property type="project" value="InterPro"/>
</dbReference>
<dbReference type="GO" id="GO:0000049">
    <property type="term" value="F:tRNA binding"/>
    <property type="evidence" value="ECO:0007669"/>
    <property type="project" value="UniProtKB-UniRule"/>
</dbReference>
<dbReference type="GO" id="GO:0006412">
    <property type="term" value="P:translation"/>
    <property type="evidence" value="ECO:0007669"/>
    <property type="project" value="UniProtKB-UniRule"/>
</dbReference>
<dbReference type="CDD" id="cd14869">
    <property type="entry name" value="uS7_Bacteria"/>
    <property type="match status" value="1"/>
</dbReference>
<dbReference type="FunFam" id="1.10.455.10:FF:000001">
    <property type="entry name" value="30S ribosomal protein S7"/>
    <property type="match status" value="1"/>
</dbReference>
<dbReference type="Gene3D" id="1.10.455.10">
    <property type="entry name" value="Ribosomal protein S7 domain"/>
    <property type="match status" value="1"/>
</dbReference>
<dbReference type="HAMAP" id="MF_00480_B">
    <property type="entry name" value="Ribosomal_uS7_B"/>
    <property type="match status" value="1"/>
</dbReference>
<dbReference type="InterPro" id="IPR000235">
    <property type="entry name" value="Ribosomal_uS7"/>
</dbReference>
<dbReference type="InterPro" id="IPR005717">
    <property type="entry name" value="Ribosomal_uS7_bac/org-type"/>
</dbReference>
<dbReference type="InterPro" id="IPR020606">
    <property type="entry name" value="Ribosomal_uS7_CS"/>
</dbReference>
<dbReference type="InterPro" id="IPR023798">
    <property type="entry name" value="Ribosomal_uS7_dom"/>
</dbReference>
<dbReference type="InterPro" id="IPR036823">
    <property type="entry name" value="Ribosomal_uS7_dom_sf"/>
</dbReference>
<dbReference type="NCBIfam" id="TIGR01029">
    <property type="entry name" value="rpsG_bact"/>
    <property type="match status" value="1"/>
</dbReference>
<dbReference type="PANTHER" id="PTHR11205">
    <property type="entry name" value="RIBOSOMAL PROTEIN S7"/>
    <property type="match status" value="1"/>
</dbReference>
<dbReference type="Pfam" id="PF00177">
    <property type="entry name" value="Ribosomal_S7"/>
    <property type="match status" value="1"/>
</dbReference>
<dbReference type="PIRSF" id="PIRSF002122">
    <property type="entry name" value="RPS7p_RPS7a_RPS5e_RPS7o"/>
    <property type="match status" value="1"/>
</dbReference>
<dbReference type="SUPFAM" id="SSF47973">
    <property type="entry name" value="Ribosomal protein S7"/>
    <property type="match status" value="1"/>
</dbReference>
<dbReference type="PROSITE" id="PS00052">
    <property type="entry name" value="RIBOSOMAL_S7"/>
    <property type="match status" value="1"/>
</dbReference>
<feature type="chain" id="PRO_0000124302" description="Small ribosomal subunit protein uS7">
    <location>
        <begin position="1"/>
        <end position="155"/>
    </location>
</feature>
<comment type="function">
    <text evidence="1">One of the primary rRNA binding proteins, it binds directly to 16S rRNA where it nucleates assembly of the head domain of the 30S subunit. Is located at the subunit interface close to the decoding center, probably blocks exit of the E-site tRNA.</text>
</comment>
<comment type="subunit">
    <text evidence="1">Part of the 30S ribosomal subunit. Contacts proteins S9 and S11.</text>
</comment>
<comment type="similarity">
    <text evidence="1">Belongs to the universal ribosomal protein uS7 family.</text>
</comment>
<organism>
    <name type="scientific">Malacoplasma penetrans (strain HF-2)</name>
    <name type="common">Mycoplasma penetrans</name>
    <dbReference type="NCBI Taxonomy" id="272633"/>
    <lineage>
        <taxon>Bacteria</taxon>
        <taxon>Bacillati</taxon>
        <taxon>Mycoplasmatota</taxon>
        <taxon>Mycoplasmoidales</taxon>
        <taxon>Mycoplasmoidaceae</taxon>
        <taxon>Malacoplasma</taxon>
    </lineage>
</organism>
<reference key="1">
    <citation type="journal article" date="2002" name="Nucleic Acids Res.">
        <title>The complete genomic sequence of Mycoplasma penetrans, an intracellular bacterial pathogen in humans.</title>
        <authorList>
            <person name="Sasaki Y."/>
            <person name="Ishikawa J."/>
            <person name="Yamashita A."/>
            <person name="Oshima K."/>
            <person name="Kenri T."/>
            <person name="Furuya K."/>
            <person name="Yoshino C."/>
            <person name="Horino A."/>
            <person name="Shiba T."/>
            <person name="Sasaki T."/>
            <person name="Hattori M."/>
        </authorList>
    </citation>
    <scope>NUCLEOTIDE SEQUENCE [LARGE SCALE GENOMIC DNA]</scope>
    <source>
        <strain>HF-2</strain>
    </source>
</reference>
<name>RS7_MALP2</name>
<evidence type="ECO:0000255" key="1">
    <source>
        <dbReference type="HAMAP-Rule" id="MF_00480"/>
    </source>
</evidence>
<evidence type="ECO:0000305" key="2"/>
<proteinExistence type="inferred from homology"/>